<gene>
    <name evidence="1" type="primary">der</name>
    <name type="synonym">engA</name>
    <name type="ordered locus">BCQ_1573</name>
</gene>
<feature type="chain" id="PRO_1000124342" description="GTPase Der">
    <location>
        <begin position="1"/>
        <end position="436"/>
    </location>
</feature>
<feature type="domain" description="EngA-type G 1">
    <location>
        <begin position="4"/>
        <end position="167"/>
    </location>
</feature>
<feature type="domain" description="EngA-type G 2">
    <location>
        <begin position="176"/>
        <end position="351"/>
    </location>
</feature>
<feature type="domain" description="KH-like" evidence="1">
    <location>
        <begin position="352"/>
        <end position="436"/>
    </location>
</feature>
<feature type="binding site" evidence="1">
    <location>
        <begin position="10"/>
        <end position="17"/>
    </location>
    <ligand>
        <name>GTP</name>
        <dbReference type="ChEBI" id="CHEBI:37565"/>
        <label>1</label>
    </ligand>
</feature>
<feature type="binding site" evidence="1">
    <location>
        <begin position="57"/>
        <end position="61"/>
    </location>
    <ligand>
        <name>GTP</name>
        <dbReference type="ChEBI" id="CHEBI:37565"/>
        <label>1</label>
    </ligand>
</feature>
<feature type="binding site" evidence="1">
    <location>
        <begin position="119"/>
        <end position="122"/>
    </location>
    <ligand>
        <name>GTP</name>
        <dbReference type="ChEBI" id="CHEBI:37565"/>
        <label>1</label>
    </ligand>
</feature>
<feature type="binding site" evidence="1">
    <location>
        <begin position="182"/>
        <end position="189"/>
    </location>
    <ligand>
        <name>GTP</name>
        <dbReference type="ChEBI" id="CHEBI:37565"/>
        <label>2</label>
    </ligand>
</feature>
<feature type="binding site" evidence="1">
    <location>
        <begin position="229"/>
        <end position="233"/>
    </location>
    <ligand>
        <name>GTP</name>
        <dbReference type="ChEBI" id="CHEBI:37565"/>
        <label>2</label>
    </ligand>
</feature>
<feature type="binding site" evidence="1">
    <location>
        <begin position="294"/>
        <end position="297"/>
    </location>
    <ligand>
        <name>GTP</name>
        <dbReference type="ChEBI" id="CHEBI:37565"/>
        <label>2</label>
    </ligand>
</feature>
<organism>
    <name type="scientific">Bacillus cereus (strain Q1)</name>
    <dbReference type="NCBI Taxonomy" id="361100"/>
    <lineage>
        <taxon>Bacteria</taxon>
        <taxon>Bacillati</taxon>
        <taxon>Bacillota</taxon>
        <taxon>Bacilli</taxon>
        <taxon>Bacillales</taxon>
        <taxon>Bacillaceae</taxon>
        <taxon>Bacillus</taxon>
        <taxon>Bacillus cereus group</taxon>
    </lineage>
</organism>
<name>DER_BACCQ</name>
<sequence length="436" mass="48618">MPKPVIAIVGRPNVGKSTIFNRIVGERVSIVEDIPGVTRDRIYSAGEWLNHEFNIIDTGGIDIGDEPFLTQIRQQAEVAIDEADVIIFMTNGRDGVTAADEEVAKILYRSNKPVVLAVNKVDNPEMRSDIYDFYALGFGEPFPISGTHGLGLGDLLDEAAQHFPKIEEDGYDEDTIRFSLIGRPNVGKSSLVNALLGQERVIVSNVAGTTRDAVDTPYSKDGKDYVIIDTAGMRKKGKVYESTEKYSVLRALRAIERSDVVLVVLDGEEGIIEQDKKIAGYAHDSGRAVVIVVNKWDAVKKDEKTMKAFEENIRAHFQFLEYAPIVFLSAKTRKRTQTLIPVIDEVNESHSIRIQTNVLNDVIMDAVAMNPTPTHNGSRLKIFYATQVAVKPPTFVVFVNDPELLHFSYERFLKNRLRESFGFVGTPIHIIARARD</sequence>
<accession>B9IVM6</accession>
<proteinExistence type="inferred from homology"/>
<reference key="1">
    <citation type="journal article" date="2009" name="J. Bacteriol.">
        <title>Complete genome sequence of the extremophilic Bacillus cereus strain Q1 with industrial applications.</title>
        <authorList>
            <person name="Xiong Z."/>
            <person name="Jiang Y."/>
            <person name="Qi D."/>
            <person name="Lu H."/>
            <person name="Yang F."/>
            <person name="Yang J."/>
            <person name="Chen L."/>
            <person name="Sun L."/>
            <person name="Xu X."/>
            <person name="Xue Y."/>
            <person name="Zhu Y."/>
            <person name="Jin Q."/>
        </authorList>
    </citation>
    <scope>NUCLEOTIDE SEQUENCE [LARGE SCALE GENOMIC DNA]</scope>
    <source>
        <strain>Q1</strain>
    </source>
</reference>
<dbReference type="EMBL" id="CP000227">
    <property type="protein sequence ID" value="ACM12001.1"/>
    <property type="molecule type" value="Genomic_DNA"/>
</dbReference>
<dbReference type="SMR" id="B9IVM6"/>
<dbReference type="KEGG" id="bcq:BCQ_1573"/>
<dbReference type="HOGENOM" id="CLU_016077_6_2_9"/>
<dbReference type="Proteomes" id="UP000000441">
    <property type="component" value="Chromosome"/>
</dbReference>
<dbReference type="GO" id="GO:0005525">
    <property type="term" value="F:GTP binding"/>
    <property type="evidence" value="ECO:0007669"/>
    <property type="project" value="UniProtKB-UniRule"/>
</dbReference>
<dbReference type="GO" id="GO:0043022">
    <property type="term" value="F:ribosome binding"/>
    <property type="evidence" value="ECO:0007669"/>
    <property type="project" value="TreeGrafter"/>
</dbReference>
<dbReference type="GO" id="GO:0042254">
    <property type="term" value="P:ribosome biogenesis"/>
    <property type="evidence" value="ECO:0007669"/>
    <property type="project" value="UniProtKB-KW"/>
</dbReference>
<dbReference type="CDD" id="cd01894">
    <property type="entry name" value="EngA1"/>
    <property type="match status" value="1"/>
</dbReference>
<dbReference type="CDD" id="cd01895">
    <property type="entry name" value="EngA2"/>
    <property type="match status" value="1"/>
</dbReference>
<dbReference type="FunFam" id="3.30.300.20:FF:000004">
    <property type="entry name" value="GTPase Der"/>
    <property type="match status" value="1"/>
</dbReference>
<dbReference type="FunFam" id="3.40.50.300:FF:000040">
    <property type="entry name" value="GTPase Der"/>
    <property type="match status" value="1"/>
</dbReference>
<dbReference type="FunFam" id="3.40.50.300:FF:000057">
    <property type="entry name" value="GTPase Der"/>
    <property type="match status" value="1"/>
</dbReference>
<dbReference type="Gene3D" id="3.30.300.20">
    <property type="match status" value="1"/>
</dbReference>
<dbReference type="Gene3D" id="3.40.50.300">
    <property type="entry name" value="P-loop containing nucleotide triphosphate hydrolases"/>
    <property type="match status" value="2"/>
</dbReference>
<dbReference type="HAMAP" id="MF_00195">
    <property type="entry name" value="GTPase_Der"/>
    <property type="match status" value="1"/>
</dbReference>
<dbReference type="InterPro" id="IPR031166">
    <property type="entry name" value="G_ENGA"/>
</dbReference>
<dbReference type="InterPro" id="IPR006073">
    <property type="entry name" value="GTP-bd"/>
</dbReference>
<dbReference type="InterPro" id="IPR016484">
    <property type="entry name" value="GTPase_Der"/>
</dbReference>
<dbReference type="InterPro" id="IPR032859">
    <property type="entry name" value="KH_dom-like"/>
</dbReference>
<dbReference type="InterPro" id="IPR015946">
    <property type="entry name" value="KH_dom-like_a/b"/>
</dbReference>
<dbReference type="InterPro" id="IPR027417">
    <property type="entry name" value="P-loop_NTPase"/>
</dbReference>
<dbReference type="InterPro" id="IPR005225">
    <property type="entry name" value="Small_GTP-bd"/>
</dbReference>
<dbReference type="NCBIfam" id="TIGR03594">
    <property type="entry name" value="GTPase_EngA"/>
    <property type="match status" value="1"/>
</dbReference>
<dbReference type="NCBIfam" id="TIGR00231">
    <property type="entry name" value="small_GTP"/>
    <property type="match status" value="2"/>
</dbReference>
<dbReference type="PANTHER" id="PTHR43834">
    <property type="entry name" value="GTPASE DER"/>
    <property type="match status" value="1"/>
</dbReference>
<dbReference type="PANTHER" id="PTHR43834:SF6">
    <property type="entry name" value="GTPASE DER"/>
    <property type="match status" value="1"/>
</dbReference>
<dbReference type="Pfam" id="PF14714">
    <property type="entry name" value="KH_dom-like"/>
    <property type="match status" value="1"/>
</dbReference>
<dbReference type="Pfam" id="PF01926">
    <property type="entry name" value="MMR_HSR1"/>
    <property type="match status" value="2"/>
</dbReference>
<dbReference type="PIRSF" id="PIRSF006485">
    <property type="entry name" value="GTP-binding_EngA"/>
    <property type="match status" value="1"/>
</dbReference>
<dbReference type="PRINTS" id="PR00326">
    <property type="entry name" value="GTP1OBG"/>
</dbReference>
<dbReference type="SUPFAM" id="SSF52540">
    <property type="entry name" value="P-loop containing nucleoside triphosphate hydrolases"/>
    <property type="match status" value="2"/>
</dbReference>
<dbReference type="PROSITE" id="PS51712">
    <property type="entry name" value="G_ENGA"/>
    <property type="match status" value="2"/>
</dbReference>
<evidence type="ECO:0000255" key="1">
    <source>
        <dbReference type="HAMAP-Rule" id="MF_00195"/>
    </source>
</evidence>
<comment type="function">
    <text evidence="1">GTPase that plays an essential role in the late steps of ribosome biogenesis.</text>
</comment>
<comment type="subunit">
    <text evidence="1">Associates with the 50S ribosomal subunit.</text>
</comment>
<comment type="similarity">
    <text evidence="1">Belongs to the TRAFAC class TrmE-Era-EngA-EngB-Septin-like GTPase superfamily. EngA (Der) GTPase family.</text>
</comment>
<keyword id="KW-0342">GTP-binding</keyword>
<keyword id="KW-0547">Nucleotide-binding</keyword>
<keyword id="KW-0677">Repeat</keyword>
<keyword id="KW-0690">Ribosome biogenesis</keyword>
<protein>
    <recommendedName>
        <fullName evidence="1">GTPase Der</fullName>
    </recommendedName>
    <alternativeName>
        <fullName evidence="1">GTP-binding protein EngA</fullName>
    </alternativeName>
</protein>